<protein>
    <recommendedName>
        <fullName>Preprotein translocase subunit SECY, chloroplastic</fullName>
    </recommendedName>
    <alternativeName>
        <fullName>CpSecY</fullName>
    </alternativeName>
</protein>
<sequence length="553" mass="59354">MVTATTTPPQCWRGLPALARAPPPLSSPLRPRAVAAAAPIYPLRRRIAITTTRGRRGTLDCSPRCTLETAGPGFDPLGLYEEGSNSLSRSPLSTFFGIMAPVFGSSSGGGASREKASGRGAAAAIEDSSIDIGDFFKGPLPGKFLKLLGFLALSRLGVYIPLGGVNREAFAGNLDQNSLLGTLDSFSGGGIGRLGICSLGIVPFINAQIVFQLLAQLYPKLQDLQRKEGEAGRKKVLQYTRYASVGFAIVQAIGQVLYLRPYVNDFSTEWVLTSVTLLTLGSVFTTFIGERISDLKLGNGTSLLIFTSIISYLPASFGRTVAQAFQDGNYVGLLTIILSFLLLVLGIVYVQEAERKIPLNYASRYSSRTGELQRSAYLPFKVNSSGVMPIIFSTSSLALPGTLARFSGLDFLKKAAIALNPGGALYLPTNVLLIAFFNYYYTFLQLDPDDLSEQLKRQGASIPLVRPGKSTAAYIKTVLNRISVLGSAFLAVLAAGPSLVEQTSHLTAFRGFAGTSVLILVGCATDTARKVQAEIISQKYKNIEFYDVNRFGQ</sequence>
<comment type="function">
    <text evidence="1">The central subunit of the protein translocation channel SecYE. Consists of two halves formed by TMs 1-5 and 6-10. These two domains form a lateral gate at the front which open onto the bilayer between TMs 2 and 7, and are clamped together by SecE at the back. The channel is closed by both a pore ring composed of hydrophobic SecY resides and a short helix (helix 2A) on the extracellular side of the membrane which forms a plug (By similarity).</text>
</comment>
<comment type="subunit">
    <text evidence="1">Component of the plastid Sec protein translocase complex, which is composed of at least SECY and SECE.</text>
</comment>
<comment type="subcellular location">
    <subcellularLocation>
        <location evidence="1">Plastid</location>
        <location evidence="1">Chloroplast thylakoid membrane</location>
        <topology evidence="1">Multi-pass membrane protein</topology>
    </subcellularLocation>
</comment>
<comment type="similarity">
    <text evidence="3">Belongs to the SecY/SEC61-alpha family.</text>
</comment>
<comment type="sequence caution" evidence="3">
    <conflict type="erroneous gene model prediction">
        <sequence resource="EMBL-CDS" id="AAB96657"/>
    </conflict>
</comment>
<gene>
    <name type="primary">SECY</name>
    <name type="synonym">CSY1</name>
</gene>
<keyword id="KW-0150">Chloroplast</keyword>
<keyword id="KW-0472">Membrane</keyword>
<keyword id="KW-0934">Plastid</keyword>
<keyword id="KW-0653">Protein transport</keyword>
<keyword id="KW-1185">Reference proteome</keyword>
<keyword id="KW-0793">Thylakoid</keyword>
<keyword id="KW-0809">Transit peptide</keyword>
<keyword id="KW-0811">Translocation</keyword>
<keyword id="KW-0812">Transmembrane</keyword>
<keyword id="KW-1133">Transmembrane helix</keyword>
<keyword id="KW-0813">Transport</keyword>
<evidence type="ECO:0000250" key="1"/>
<evidence type="ECO:0000255" key="2"/>
<evidence type="ECO:0000305" key="3"/>
<dbReference type="EMBL" id="AF039304">
    <property type="protein sequence ID" value="AAC05019.1"/>
    <property type="molecule type" value="mRNA"/>
</dbReference>
<dbReference type="EMBL" id="AF039305">
    <property type="protein sequence ID" value="AAB96657.1"/>
    <property type="status" value="ALT_SEQ"/>
    <property type="molecule type" value="Genomic_DNA"/>
</dbReference>
<dbReference type="PIR" id="T01416">
    <property type="entry name" value="T01416"/>
</dbReference>
<dbReference type="PIR" id="T01432">
    <property type="entry name" value="T01432"/>
</dbReference>
<dbReference type="SMR" id="O63066"/>
<dbReference type="FunCoup" id="O63066">
    <property type="interactions" value="970"/>
</dbReference>
<dbReference type="STRING" id="4577.O63066"/>
<dbReference type="PaxDb" id="4577-GRMZM5G809546_P01"/>
<dbReference type="eggNOG" id="ENOG502QSNV">
    <property type="taxonomic scope" value="Eukaryota"/>
</dbReference>
<dbReference type="InParanoid" id="O63066"/>
<dbReference type="Proteomes" id="UP000007305">
    <property type="component" value="Unplaced"/>
</dbReference>
<dbReference type="ExpressionAtlas" id="O63066">
    <property type="expression patterns" value="baseline and differential"/>
</dbReference>
<dbReference type="GO" id="GO:0009535">
    <property type="term" value="C:chloroplast thylakoid membrane"/>
    <property type="evidence" value="ECO:0000318"/>
    <property type="project" value="GO_Central"/>
</dbReference>
<dbReference type="GO" id="GO:0008320">
    <property type="term" value="F:protein transmembrane transporter activity"/>
    <property type="evidence" value="ECO:0000318"/>
    <property type="project" value="GO_Central"/>
</dbReference>
<dbReference type="GO" id="GO:0005048">
    <property type="term" value="F:signal sequence binding"/>
    <property type="evidence" value="ECO:0000318"/>
    <property type="project" value="GO_Central"/>
</dbReference>
<dbReference type="GO" id="GO:0006616">
    <property type="term" value="P:SRP-dependent cotranslational protein targeting to membrane, translocation"/>
    <property type="evidence" value="ECO:0000318"/>
    <property type="project" value="GO_Central"/>
</dbReference>
<dbReference type="FunFam" id="1.10.3370.10:FF:000003">
    <property type="entry name" value="Preprotein translocase subunit SECY, chloroplastic"/>
    <property type="match status" value="1"/>
</dbReference>
<dbReference type="Gene3D" id="1.10.3370.10">
    <property type="entry name" value="SecY subunit domain"/>
    <property type="match status" value="1"/>
</dbReference>
<dbReference type="HAMAP" id="MF_01465">
    <property type="entry name" value="SecY"/>
    <property type="match status" value="1"/>
</dbReference>
<dbReference type="InterPro" id="IPR026593">
    <property type="entry name" value="SecY"/>
</dbReference>
<dbReference type="InterPro" id="IPR002208">
    <property type="entry name" value="SecY/SEC61-alpha"/>
</dbReference>
<dbReference type="InterPro" id="IPR030659">
    <property type="entry name" value="SecY_CS"/>
</dbReference>
<dbReference type="InterPro" id="IPR023201">
    <property type="entry name" value="SecY_dom_sf"/>
</dbReference>
<dbReference type="NCBIfam" id="TIGR00967">
    <property type="entry name" value="3a0501s007"/>
    <property type="match status" value="1"/>
</dbReference>
<dbReference type="PANTHER" id="PTHR10906">
    <property type="entry name" value="SECY/SEC61-ALPHA FAMILY MEMBER"/>
    <property type="match status" value="1"/>
</dbReference>
<dbReference type="Pfam" id="PF00344">
    <property type="entry name" value="SecY"/>
    <property type="match status" value="1"/>
</dbReference>
<dbReference type="PRINTS" id="PR00303">
    <property type="entry name" value="SECYTRNLCASE"/>
</dbReference>
<dbReference type="SUPFAM" id="SSF103491">
    <property type="entry name" value="Preprotein translocase SecY subunit"/>
    <property type="match status" value="1"/>
</dbReference>
<dbReference type="PROSITE" id="PS00755">
    <property type="entry name" value="SECY_1"/>
    <property type="match status" value="1"/>
</dbReference>
<dbReference type="PROSITE" id="PS00756">
    <property type="entry name" value="SECY_2"/>
    <property type="match status" value="1"/>
</dbReference>
<accession>O63066</accession>
<accession>O47005</accession>
<name>SECY_MAIZE</name>
<feature type="transit peptide" description="Chloroplast" evidence="2">
    <location>
        <begin position="1"/>
        <end status="unknown"/>
    </location>
</feature>
<feature type="chain" id="PRO_0000031996" description="Preprotein translocase subunit SECY, chloroplastic">
    <location>
        <begin status="unknown"/>
        <end position="553"/>
    </location>
</feature>
<feature type="transmembrane region" description="Helical" evidence="2">
    <location>
        <begin position="144"/>
        <end position="164"/>
    </location>
</feature>
<feature type="transmembrane region" description="Helical" evidence="2">
    <location>
        <begin position="194"/>
        <end position="214"/>
    </location>
</feature>
<feature type="transmembrane region" description="Helical" evidence="2">
    <location>
        <begin position="243"/>
        <end position="263"/>
    </location>
</feature>
<feature type="transmembrane region" description="Helical" evidence="2">
    <location>
        <begin position="270"/>
        <end position="290"/>
    </location>
</feature>
<feature type="transmembrane region" description="Helical" evidence="2">
    <location>
        <begin position="297"/>
        <end position="317"/>
    </location>
</feature>
<feature type="transmembrane region" description="Helical" evidence="2">
    <location>
        <begin position="330"/>
        <end position="350"/>
    </location>
</feature>
<feature type="transmembrane region" description="Helical" evidence="2">
    <location>
        <begin position="384"/>
        <end position="404"/>
    </location>
</feature>
<feature type="transmembrane region" description="Helical" evidence="2">
    <location>
        <begin position="417"/>
        <end position="437"/>
    </location>
</feature>
<feature type="transmembrane region" description="Helical" evidence="2">
    <location>
        <begin position="482"/>
        <end position="502"/>
    </location>
</feature>
<feature type="transmembrane region" description="Helical" evidence="2">
    <location>
        <begin position="505"/>
        <end position="525"/>
    </location>
</feature>
<reference key="1">
    <citation type="journal article" date="1998" name="J. Cell Biol.">
        <title>A SecY homologue is required for the elaboration of the chloroplast thylakoid membrane and for normal chloroplast gene expression.</title>
        <authorList>
            <person name="Roy L.M."/>
            <person name="Barkan A."/>
        </authorList>
    </citation>
    <scope>NUCLEOTIDE SEQUENCE [GENOMIC DNA / MRNA]</scope>
    <source>
        <strain>cv. B73</strain>
    </source>
</reference>
<organism>
    <name type="scientific">Zea mays</name>
    <name type="common">Maize</name>
    <dbReference type="NCBI Taxonomy" id="4577"/>
    <lineage>
        <taxon>Eukaryota</taxon>
        <taxon>Viridiplantae</taxon>
        <taxon>Streptophyta</taxon>
        <taxon>Embryophyta</taxon>
        <taxon>Tracheophyta</taxon>
        <taxon>Spermatophyta</taxon>
        <taxon>Magnoliopsida</taxon>
        <taxon>Liliopsida</taxon>
        <taxon>Poales</taxon>
        <taxon>Poaceae</taxon>
        <taxon>PACMAD clade</taxon>
        <taxon>Panicoideae</taxon>
        <taxon>Andropogonodae</taxon>
        <taxon>Andropogoneae</taxon>
        <taxon>Tripsacinae</taxon>
        <taxon>Zea</taxon>
    </lineage>
</organism>
<proteinExistence type="evidence at transcript level"/>